<sequence>MTRKLFVGGNWKMNGSYSHINTFFDTLQKADTDPNADIVIGVPACYLKYAQDKAPKGIKIAAENCYKVGSGAFTGEISTEMIKDCGCEWVILGHSERRHIFGESNELIGEKVKHALDSGLNVIPCIGELLSEREAGKTNDVCFAQMDAIAKNVPSKEAWDKVVIAYEPVWAIGTGKTATPAQAQEVHKVVRDWIRKHVDAGIADKVRILYGGSVTASNAKDLGTQPDVDGFLVGGASLKPDFITIINARR</sequence>
<organism>
    <name type="scientific">Taenia solium</name>
    <name type="common">Pork tapeworm</name>
    <dbReference type="NCBI Taxonomy" id="6204"/>
    <lineage>
        <taxon>Eukaryota</taxon>
        <taxon>Metazoa</taxon>
        <taxon>Spiralia</taxon>
        <taxon>Lophotrochozoa</taxon>
        <taxon>Platyhelminthes</taxon>
        <taxon>Cestoda</taxon>
        <taxon>Eucestoda</taxon>
        <taxon>Cyclophyllidea</taxon>
        <taxon>Taeniidae</taxon>
        <taxon>Taenia</taxon>
    </lineage>
</organism>
<keyword id="KW-0002">3D-structure</keyword>
<keyword id="KW-0963">Cytoplasm</keyword>
<keyword id="KW-0312">Gluconeogenesis</keyword>
<keyword id="KW-0324">Glycolysis</keyword>
<keyword id="KW-0413">Isomerase</keyword>
<protein>
    <recommendedName>
        <fullName>Triosephosphate isomerase</fullName>
        <shortName>TIM</shortName>
        <ecNumber>5.3.1.1</ecNumber>
    </recommendedName>
    <alternativeName>
        <fullName>Triose-phosphate isomerase</fullName>
    </alternativeName>
</protein>
<accession>Q9GTX8</accession>
<reference key="1">
    <citation type="journal article" date="2000" name="Int. J. Parasitol.">
        <title>Cloning, expression and characterisation of a recombinant triosephosphate isomerase from Taenia solium.</title>
        <authorList>
            <person name="Jimenez L."/>
            <person name="Vibanco-Perez N."/>
            <person name="Navarro L."/>
            <person name="Landa A."/>
        </authorList>
    </citation>
    <scope>NUCLEOTIDE SEQUENCE [MRNA]</scope>
</reference>
<comment type="catalytic activity">
    <reaction>
        <text>D-glyceraldehyde 3-phosphate = dihydroxyacetone phosphate</text>
        <dbReference type="Rhea" id="RHEA:18585"/>
        <dbReference type="ChEBI" id="CHEBI:57642"/>
        <dbReference type="ChEBI" id="CHEBI:59776"/>
        <dbReference type="EC" id="5.3.1.1"/>
    </reaction>
</comment>
<comment type="pathway">
    <text>Carbohydrate biosynthesis; gluconeogenesis.</text>
</comment>
<comment type="pathway">
    <text>Carbohydrate degradation; glycolysis; D-glyceraldehyde 3-phosphate from glycerone phosphate: step 1/1.</text>
</comment>
<comment type="subunit">
    <text evidence="1">Homodimer.</text>
</comment>
<comment type="subcellular location">
    <subcellularLocation>
        <location evidence="2">Cytoplasm</location>
    </subcellularLocation>
</comment>
<comment type="similarity">
    <text evidence="2">Belongs to the triosephosphate isomerase family.</text>
</comment>
<evidence type="ECO:0000250" key="1"/>
<evidence type="ECO:0000305" key="2"/>
<evidence type="ECO:0007829" key="3">
    <source>
        <dbReference type="PDB" id="6OOG"/>
    </source>
</evidence>
<feature type="chain" id="PRO_0000090141" description="Triosephosphate isomerase">
    <location>
        <begin position="1"/>
        <end position="250"/>
    </location>
</feature>
<feature type="active site" description="Electrophile" evidence="1">
    <location>
        <position position="94"/>
    </location>
</feature>
<feature type="active site" description="Proton acceptor" evidence="1">
    <location>
        <position position="167"/>
    </location>
</feature>
<feature type="binding site" evidence="1">
    <location>
        <position position="10"/>
    </location>
    <ligand>
        <name>substrate</name>
    </ligand>
</feature>
<feature type="binding site" evidence="1">
    <location>
        <position position="12"/>
    </location>
    <ligand>
        <name>substrate</name>
    </ligand>
</feature>
<feature type="strand" evidence="3">
    <location>
        <begin position="6"/>
        <end position="10"/>
    </location>
</feature>
<feature type="helix" evidence="3">
    <location>
        <begin position="17"/>
        <end position="29"/>
    </location>
</feature>
<feature type="strand" evidence="3">
    <location>
        <begin position="37"/>
        <end position="42"/>
    </location>
</feature>
<feature type="helix" evidence="3">
    <location>
        <begin position="44"/>
        <end position="46"/>
    </location>
</feature>
<feature type="helix" evidence="3">
    <location>
        <begin position="47"/>
        <end position="53"/>
    </location>
</feature>
<feature type="strand" evidence="3">
    <location>
        <begin position="58"/>
        <end position="63"/>
    </location>
</feature>
<feature type="strand" evidence="3">
    <location>
        <begin position="67"/>
        <end position="72"/>
    </location>
</feature>
<feature type="helix" evidence="3">
    <location>
        <begin position="79"/>
        <end position="84"/>
    </location>
</feature>
<feature type="strand" evidence="3">
    <location>
        <begin position="89"/>
        <end position="93"/>
    </location>
</feature>
<feature type="helix" evidence="3">
    <location>
        <begin position="95"/>
        <end position="99"/>
    </location>
</feature>
<feature type="helix" evidence="3">
    <location>
        <begin position="105"/>
        <end position="117"/>
    </location>
</feature>
<feature type="strand" evidence="3">
    <location>
        <begin position="121"/>
        <end position="126"/>
    </location>
</feature>
<feature type="helix" evidence="3">
    <location>
        <begin position="130"/>
        <end position="134"/>
    </location>
</feature>
<feature type="helix" evidence="3">
    <location>
        <begin position="138"/>
        <end position="150"/>
    </location>
</feature>
<feature type="helix" evidence="3">
    <location>
        <begin position="157"/>
        <end position="161"/>
    </location>
</feature>
<feature type="strand" evidence="3">
    <location>
        <begin position="164"/>
        <end position="166"/>
    </location>
</feature>
<feature type="helix" evidence="3">
    <location>
        <begin position="169"/>
        <end position="171"/>
    </location>
</feature>
<feature type="turn" evidence="3">
    <location>
        <begin position="172"/>
        <end position="174"/>
    </location>
</feature>
<feature type="helix" evidence="3">
    <location>
        <begin position="180"/>
        <end position="197"/>
    </location>
</feature>
<feature type="helix" evidence="3">
    <location>
        <begin position="200"/>
        <end position="205"/>
    </location>
</feature>
<feature type="strand" evidence="3">
    <location>
        <begin position="208"/>
        <end position="213"/>
    </location>
</feature>
<feature type="turn" evidence="3">
    <location>
        <begin position="216"/>
        <end position="218"/>
    </location>
</feature>
<feature type="helix" evidence="3">
    <location>
        <begin position="219"/>
        <end position="223"/>
    </location>
</feature>
<feature type="strand" evidence="3">
    <location>
        <begin position="230"/>
        <end position="234"/>
    </location>
</feature>
<feature type="helix" evidence="3">
    <location>
        <begin position="235"/>
        <end position="238"/>
    </location>
</feature>
<feature type="helix" evidence="3">
    <location>
        <begin position="241"/>
        <end position="246"/>
    </location>
</feature>
<feature type="turn" evidence="3">
    <location>
        <begin position="247"/>
        <end position="249"/>
    </location>
</feature>
<dbReference type="EC" id="5.3.1.1"/>
<dbReference type="EMBL" id="AF244894">
    <property type="protein sequence ID" value="AAG21132.1"/>
    <property type="molecule type" value="mRNA"/>
</dbReference>
<dbReference type="PDB" id="6OOG">
    <property type="method" value="X-ray"/>
    <property type="resolution" value="2.02 A"/>
    <property type="chains" value="A=1-250"/>
</dbReference>
<dbReference type="PDBsum" id="6OOG"/>
<dbReference type="SMR" id="Q9GTX8"/>
<dbReference type="UniPathway" id="UPA00109">
    <property type="reaction ID" value="UER00189"/>
</dbReference>
<dbReference type="UniPathway" id="UPA00138"/>
<dbReference type="GO" id="GO:0005829">
    <property type="term" value="C:cytosol"/>
    <property type="evidence" value="ECO:0007669"/>
    <property type="project" value="TreeGrafter"/>
</dbReference>
<dbReference type="GO" id="GO:0004807">
    <property type="term" value="F:triose-phosphate isomerase activity"/>
    <property type="evidence" value="ECO:0007669"/>
    <property type="project" value="UniProtKB-EC"/>
</dbReference>
<dbReference type="GO" id="GO:0006094">
    <property type="term" value="P:gluconeogenesis"/>
    <property type="evidence" value="ECO:0007669"/>
    <property type="project" value="UniProtKB-UniPathway"/>
</dbReference>
<dbReference type="GO" id="GO:0046166">
    <property type="term" value="P:glyceraldehyde-3-phosphate biosynthetic process"/>
    <property type="evidence" value="ECO:0007669"/>
    <property type="project" value="TreeGrafter"/>
</dbReference>
<dbReference type="GO" id="GO:0019563">
    <property type="term" value="P:glycerol catabolic process"/>
    <property type="evidence" value="ECO:0007669"/>
    <property type="project" value="TreeGrafter"/>
</dbReference>
<dbReference type="GO" id="GO:0006096">
    <property type="term" value="P:glycolytic process"/>
    <property type="evidence" value="ECO:0007669"/>
    <property type="project" value="UniProtKB-UniPathway"/>
</dbReference>
<dbReference type="CDD" id="cd00311">
    <property type="entry name" value="TIM"/>
    <property type="match status" value="1"/>
</dbReference>
<dbReference type="FunFam" id="3.20.20.70:FF:000025">
    <property type="entry name" value="Triosephosphate isomerase"/>
    <property type="match status" value="1"/>
</dbReference>
<dbReference type="Gene3D" id="3.20.20.70">
    <property type="entry name" value="Aldolase class I"/>
    <property type="match status" value="1"/>
</dbReference>
<dbReference type="HAMAP" id="MF_00147_B">
    <property type="entry name" value="TIM_B"/>
    <property type="match status" value="1"/>
</dbReference>
<dbReference type="InterPro" id="IPR013785">
    <property type="entry name" value="Aldolase_TIM"/>
</dbReference>
<dbReference type="InterPro" id="IPR035990">
    <property type="entry name" value="TIM_sf"/>
</dbReference>
<dbReference type="InterPro" id="IPR022896">
    <property type="entry name" value="TrioseP_Isoase_bac/euk"/>
</dbReference>
<dbReference type="InterPro" id="IPR000652">
    <property type="entry name" value="Triosephosphate_isomerase"/>
</dbReference>
<dbReference type="InterPro" id="IPR020861">
    <property type="entry name" value="Triosephosphate_isomerase_AS"/>
</dbReference>
<dbReference type="NCBIfam" id="TIGR00419">
    <property type="entry name" value="tim"/>
    <property type="match status" value="1"/>
</dbReference>
<dbReference type="PANTHER" id="PTHR21139">
    <property type="entry name" value="TRIOSEPHOSPHATE ISOMERASE"/>
    <property type="match status" value="1"/>
</dbReference>
<dbReference type="PANTHER" id="PTHR21139:SF2">
    <property type="entry name" value="TRIOSEPHOSPHATE ISOMERASE"/>
    <property type="match status" value="1"/>
</dbReference>
<dbReference type="Pfam" id="PF00121">
    <property type="entry name" value="TIM"/>
    <property type="match status" value="1"/>
</dbReference>
<dbReference type="SUPFAM" id="SSF51351">
    <property type="entry name" value="Triosephosphate isomerase (TIM)"/>
    <property type="match status" value="1"/>
</dbReference>
<dbReference type="PROSITE" id="PS00171">
    <property type="entry name" value="TIM_1"/>
    <property type="match status" value="1"/>
</dbReference>
<dbReference type="PROSITE" id="PS51440">
    <property type="entry name" value="TIM_2"/>
    <property type="match status" value="1"/>
</dbReference>
<name>TPIS_TAESO</name>
<proteinExistence type="evidence at protein level"/>